<name>YMDA_SALTI</name>
<gene>
    <name type="primary">ymdA</name>
    <name type="ordered locus">STY1183</name>
    <name type="ordered locus">t1774</name>
</gene>
<organism>
    <name type="scientific">Salmonella typhi</name>
    <dbReference type="NCBI Taxonomy" id="90370"/>
    <lineage>
        <taxon>Bacteria</taxon>
        <taxon>Pseudomonadati</taxon>
        <taxon>Pseudomonadota</taxon>
        <taxon>Gammaproteobacteria</taxon>
        <taxon>Enterobacterales</taxon>
        <taxon>Enterobacteriaceae</taxon>
        <taxon>Salmonella</taxon>
    </lineage>
</organism>
<accession>P0A1T1</accession>
<accession>O54295</accession>
<protein>
    <recommendedName>
        <fullName>Uncharacterized protein YmdA</fullName>
    </recommendedName>
</protein>
<proteinExistence type="inferred from homology"/>
<keyword id="KW-0732">Signal</keyword>
<dbReference type="EMBL" id="AL513382">
    <property type="protein sequence ID" value="CAD08270.1"/>
    <property type="molecule type" value="Genomic_DNA"/>
</dbReference>
<dbReference type="EMBL" id="AE014613">
    <property type="protein sequence ID" value="AAO69397.1"/>
    <property type="molecule type" value="Genomic_DNA"/>
</dbReference>
<dbReference type="RefSeq" id="NP_455640.1">
    <property type="nucleotide sequence ID" value="NC_003198.1"/>
</dbReference>
<dbReference type="RefSeq" id="WP_000111254.1">
    <property type="nucleotide sequence ID" value="NZ_WSUR01000018.1"/>
</dbReference>
<dbReference type="STRING" id="220341.gene:17585150"/>
<dbReference type="KEGG" id="stt:t1774"/>
<dbReference type="KEGG" id="sty:STY1183"/>
<dbReference type="PATRIC" id="fig|220341.7.peg.1184"/>
<dbReference type="eggNOG" id="ENOG5032CG0">
    <property type="taxonomic scope" value="Bacteria"/>
</dbReference>
<dbReference type="HOGENOM" id="CLU_155233_3_1_6"/>
<dbReference type="OMA" id="PCEISAR"/>
<dbReference type="OrthoDB" id="6046808at2"/>
<dbReference type="Proteomes" id="UP000000541">
    <property type="component" value="Chromosome"/>
</dbReference>
<dbReference type="Proteomes" id="UP000002670">
    <property type="component" value="Chromosome"/>
</dbReference>
<comment type="similarity">
    <text evidence="2">To the N-terminal of the FimA/PapA family of fimbria proteins.</text>
</comment>
<reference key="1">
    <citation type="journal article" date="2001" name="Nature">
        <title>Complete genome sequence of a multiple drug resistant Salmonella enterica serovar Typhi CT18.</title>
        <authorList>
            <person name="Parkhill J."/>
            <person name="Dougan G."/>
            <person name="James K.D."/>
            <person name="Thomson N.R."/>
            <person name="Pickard D."/>
            <person name="Wain J."/>
            <person name="Churcher C.M."/>
            <person name="Mungall K.L."/>
            <person name="Bentley S.D."/>
            <person name="Holden M.T.G."/>
            <person name="Sebaihia M."/>
            <person name="Baker S."/>
            <person name="Basham D."/>
            <person name="Brooks K."/>
            <person name="Chillingworth T."/>
            <person name="Connerton P."/>
            <person name="Cronin A."/>
            <person name="Davis P."/>
            <person name="Davies R.M."/>
            <person name="Dowd L."/>
            <person name="White N."/>
            <person name="Farrar J."/>
            <person name="Feltwell T."/>
            <person name="Hamlin N."/>
            <person name="Haque A."/>
            <person name="Hien T.T."/>
            <person name="Holroyd S."/>
            <person name="Jagels K."/>
            <person name="Krogh A."/>
            <person name="Larsen T.S."/>
            <person name="Leather S."/>
            <person name="Moule S."/>
            <person name="O'Gaora P."/>
            <person name="Parry C."/>
            <person name="Quail M.A."/>
            <person name="Rutherford K.M."/>
            <person name="Simmonds M."/>
            <person name="Skelton J."/>
            <person name="Stevens K."/>
            <person name="Whitehead S."/>
            <person name="Barrell B.G."/>
        </authorList>
    </citation>
    <scope>NUCLEOTIDE SEQUENCE [LARGE SCALE GENOMIC DNA]</scope>
    <source>
        <strain>CT18</strain>
    </source>
</reference>
<reference key="2">
    <citation type="journal article" date="2003" name="J. Bacteriol.">
        <title>Comparative genomics of Salmonella enterica serovar Typhi strains Ty2 and CT18.</title>
        <authorList>
            <person name="Deng W."/>
            <person name="Liou S.-R."/>
            <person name="Plunkett G. III"/>
            <person name="Mayhew G.F."/>
            <person name="Rose D.J."/>
            <person name="Burland V."/>
            <person name="Kodoyianni V."/>
            <person name="Schwartz D.C."/>
            <person name="Blattner F.R."/>
        </authorList>
    </citation>
    <scope>NUCLEOTIDE SEQUENCE [LARGE SCALE GENOMIC DNA]</scope>
    <source>
        <strain>ATCC 700931 / Ty2</strain>
    </source>
</reference>
<feature type="signal peptide" evidence="1">
    <location>
        <begin position="1"/>
        <end position="25"/>
    </location>
</feature>
<feature type="chain" id="PRO_0000013820" description="Uncharacterized protein YmdA">
    <location>
        <begin position="26"/>
        <end position="106"/>
    </location>
</feature>
<sequence>MSVIKKNIPAIGLCICAFFIHSAVGQQTVQGGVIHFRGAIVEPLCDISTHAENIDLTCLREGKKQMHRIDLRQASGLPQDIQSIATVRLHYLDAQKSLAVMNIEYR</sequence>
<evidence type="ECO:0000250" key="1"/>
<evidence type="ECO:0000305" key="2"/>